<comment type="function">
    <text evidence="8">Aspartic protease with a high preference for bonds between hydrophobic residues.</text>
</comment>
<comment type="activity regulation">
    <text evidence="8">Inhibited by pepstatin.</text>
</comment>
<comment type="biophysicochemical properties">
    <phDependence>
        <text evidence="8">Optimim pH is 4.3. Active from pH 3 to 6.5.</text>
    </phDependence>
</comment>
<comment type="subunit">
    <text evidence="3 8">Heterodimer of a light chain and a heavy chain. An intermediate form is produced first, and undergoes proteolytic processing to remove the internal plant-specific insert (PSI) and the propeptide.</text>
</comment>
<comment type="subcellular location">
    <subcellularLocation>
        <location evidence="3">Microsome membrane</location>
    </subcellularLocation>
    <subcellularLocation>
        <location evidence="3">Protein storage vacuole</location>
    </subcellularLocation>
    <subcellularLocation>
        <location evidence="3">Secreted</location>
        <location evidence="3">Cell wall</location>
    </subcellularLocation>
    <subcellularLocation>
        <location evidence="3">Secreted</location>
        <location evidence="3">Extracellular space</location>
        <location evidence="3">Extracellular matrix</location>
    </subcellularLocation>
    <text evidence="1">Procardosin-F is associated with the microsomal membranes, the mature form is secreted.</text>
</comment>
<comment type="tissue specificity">
    <text evidence="8">Pistils.</text>
</comment>
<comment type="PTM">
    <text evidence="8">N-glycosylated.</text>
</comment>
<comment type="mass spectrometry" mass="27356.0" method="Electrospray" evidence="8">
    <molecule>Cardosin-F heavy chain</molecule>
    <text>Heavy chain.</text>
</comment>
<comment type="mass spectrometry" mass="10778.0" method="Electrospray" evidence="8">
    <text>Light chain. The measured range is unknown.</text>
</comment>
<comment type="similarity">
    <text evidence="4">Belongs to the peptidase A1 family.</text>
</comment>
<organism>
    <name type="scientific">Cynara cardunculus</name>
    <name type="common">Cardoon</name>
    <dbReference type="NCBI Taxonomy" id="4265"/>
    <lineage>
        <taxon>Eukaryota</taxon>
        <taxon>Viridiplantae</taxon>
        <taxon>Streptophyta</taxon>
        <taxon>Embryophyta</taxon>
        <taxon>Tracheophyta</taxon>
        <taxon>Spermatophyta</taxon>
        <taxon>Magnoliopsida</taxon>
        <taxon>eudicotyledons</taxon>
        <taxon>Gunneridae</taxon>
        <taxon>Pentapetalae</taxon>
        <taxon>asterids</taxon>
        <taxon>campanulids</taxon>
        <taxon>Asterales</taxon>
        <taxon>Asteraceae</taxon>
        <taxon>Carduoideae</taxon>
        <taxon>Cardueae</taxon>
        <taxon>Carduinae</taxon>
        <taxon>Cynara</taxon>
    </lineage>
</organism>
<reference evidence="10" key="1">
    <citation type="journal article" date="2009" name="Planta">
        <title>Multiplicity of aspartic proteinases from Cynara cardunculus L.</title>
        <authorList>
            <person name="Sarmento A.C."/>
            <person name="Lopes H."/>
            <person name="Oliveira C.S."/>
            <person name="Vitorino R."/>
            <person name="Samyn B."/>
            <person name="Sergeant K."/>
            <person name="Debyser G."/>
            <person name="Van Beeumen J."/>
            <person name="Domingues P."/>
            <person name="Amado F."/>
            <person name="Pires E."/>
            <person name="Domingues M.R."/>
            <person name="Barros M.T."/>
        </authorList>
    </citation>
    <scope>PROTEIN SEQUENCE</scope>
    <scope>FUNCTION</scope>
    <scope>ACTIVITY REGULATION</scope>
    <scope>BIOPHYSICOCHEMICAL PROPERTIES</scope>
    <scope>SUBUNIT</scope>
    <scope>TISSUE SPECIFICITY</scope>
    <scope>GLYCOSYLATION</scope>
    <scope>MASS SPECTROMETRY</scope>
    <source>
        <strain evidence="8">cv. Sylvestris</strain>
        <tissue evidence="8">Stigma</tissue>
    </source>
</reference>
<evidence type="ECO:0000250" key="1"/>
<evidence type="ECO:0000250" key="2">
    <source>
        <dbReference type="UniProtKB" id="P42210"/>
    </source>
</evidence>
<evidence type="ECO:0000250" key="3">
    <source>
        <dbReference type="UniProtKB" id="Q9XFX3"/>
    </source>
</evidence>
<evidence type="ECO:0000255" key="4"/>
<evidence type="ECO:0000255" key="5">
    <source>
        <dbReference type="PROSITE-ProRule" id="PRU00415"/>
    </source>
</evidence>
<evidence type="ECO:0000255" key="6">
    <source>
        <dbReference type="PROSITE-ProRule" id="PRU01103"/>
    </source>
</evidence>
<evidence type="ECO:0000255" key="7">
    <source>
        <dbReference type="PROSITE-ProRule" id="PRU10094"/>
    </source>
</evidence>
<evidence type="ECO:0000269" key="8">
    <source>
    </source>
</evidence>
<evidence type="ECO:0000303" key="9">
    <source>
    </source>
</evidence>
<evidence type="ECO:0000305" key="10"/>
<keyword id="KW-0064">Aspartyl protease</keyword>
<keyword id="KW-0134">Cell wall</keyword>
<keyword id="KW-0903">Direct protein sequencing</keyword>
<keyword id="KW-1015">Disulfide bond</keyword>
<keyword id="KW-0256">Endoplasmic reticulum</keyword>
<keyword id="KW-0272">Extracellular matrix</keyword>
<keyword id="KW-0325">Glycoprotein</keyword>
<keyword id="KW-0378">Hydrolase</keyword>
<keyword id="KW-0472">Membrane</keyword>
<keyword id="KW-0492">Microsome</keyword>
<keyword id="KW-0645">Protease</keyword>
<keyword id="KW-0964">Secreted</keyword>
<keyword id="KW-0926">Vacuole</keyword>
<keyword id="KW-0865">Zymogen</keyword>
<proteinExistence type="evidence at protein level"/>
<sequence length="281" mass="30561">ADSGSAVVALTNDRDTSYYGEIGIGTPPQKFTVIFDTGSSVLWVPSSKAHSMYESSGSSTYKSQDSVTIGDLVVKEQDFIEATEEADNVFLNRLFDGILGLSFQTISVPVWYNMLNQGLVKRFSFWLNRNVDEEEGGELVFGGLDPNHFRGDHTYVPVTYQYYWQFGIGDVLIGDKSTGFCAPGCQAFADSGTSLLSGPTAIVTQINHAIGANGSEELNVKFGLTPEQYILKGEATQCISGFTAMDATLLGPLWILGDVFMRPYHTVFDYGNLLVGFAEAA</sequence>
<dbReference type="EC" id="3.4.23.-"/>
<dbReference type="SMR" id="P85137"/>
<dbReference type="GO" id="GO:0005783">
    <property type="term" value="C:endoplasmic reticulum"/>
    <property type="evidence" value="ECO:0007669"/>
    <property type="project" value="UniProtKB-KW"/>
</dbReference>
<dbReference type="GO" id="GO:0005576">
    <property type="term" value="C:extracellular region"/>
    <property type="evidence" value="ECO:0007669"/>
    <property type="project" value="UniProtKB-KW"/>
</dbReference>
<dbReference type="GO" id="GO:0016020">
    <property type="term" value="C:membrane"/>
    <property type="evidence" value="ECO:0007669"/>
    <property type="project" value="UniProtKB-KW"/>
</dbReference>
<dbReference type="GO" id="GO:0000326">
    <property type="term" value="C:protein storage vacuole"/>
    <property type="evidence" value="ECO:0007669"/>
    <property type="project" value="UniProtKB-SubCell"/>
</dbReference>
<dbReference type="GO" id="GO:0004190">
    <property type="term" value="F:aspartic-type endopeptidase activity"/>
    <property type="evidence" value="ECO:0007669"/>
    <property type="project" value="UniProtKB-KW"/>
</dbReference>
<dbReference type="GO" id="GO:0006508">
    <property type="term" value="P:proteolysis"/>
    <property type="evidence" value="ECO:0007669"/>
    <property type="project" value="UniProtKB-KW"/>
</dbReference>
<dbReference type="FunFam" id="2.40.70.10:FF:000115">
    <property type="entry name" value="Lysosomal aspartic protease"/>
    <property type="match status" value="1"/>
</dbReference>
<dbReference type="Gene3D" id="2.40.70.10">
    <property type="entry name" value="Acid Proteases"/>
    <property type="match status" value="2"/>
</dbReference>
<dbReference type="InterPro" id="IPR001461">
    <property type="entry name" value="Aspartic_peptidase_A1"/>
</dbReference>
<dbReference type="InterPro" id="IPR001969">
    <property type="entry name" value="Aspartic_peptidase_AS"/>
</dbReference>
<dbReference type="InterPro" id="IPR033121">
    <property type="entry name" value="PEPTIDASE_A1"/>
</dbReference>
<dbReference type="InterPro" id="IPR021109">
    <property type="entry name" value="Peptidase_aspartic_dom_sf"/>
</dbReference>
<dbReference type="PANTHER" id="PTHR47966:SF76">
    <property type="entry name" value="ASPARTIC PROTEINASE A1"/>
    <property type="match status" value="1"/>
</dbReference>
<dbReference type="PANTHER" id="PTHR47966">
    <property type="entry name" value="BETA-SITE APP-CLEAVING ENZYME, ISOFORM A-RELATED"/>
    <property type="match status" value="1"/>
</dbReference>
<dbReference type="Pfam" id="PF00026">
    <property type="entry name" value="Asp"/>
    <property type="match status" value="2"/>
</dbReference>
<dbReference type="PRINTS" id="PR00792">
    <property type="entry name" value="PEPSIN"/>
</dbReference>
<dbReference type="SUPFAM" id="SSF50630">
    <property type="entry name" value="Acid proteases"/>
    <property type="match status" value="1"/>
</dbReference>
<dbReference type="PROSITE" id="PS00141">
    <property type="entry name" value="ASP_PROTEASE"/>
    <property type="match status" value="1"/>
</dbReference>
<dbReference type="PROSITE" id="PS51767">
    <property type="entry name" value="PEPTIDASE_A1"/>
    <property type="match status" value="1"/>
</dbReference>
<accession>P85137</accession>
<name>CARDF_CYNCA</name>
<feature type="chain" id="PRO_0000286870" description="Cardosin-F heavy chain" evidence="8">
    <location>
        <begin position="1"/>
        <end status="unknown"/>
    </location>
</feature>
<feature type="chain" id="PRO_0000394453" description="Cardosin-F light chain" evidence="8">
    <location>
        <begin status="unknown"/>
        <end position="281" status="greater than"/>
    </location>
</feature>
<feature type="domain" description="Peptidase A1" evidence="6">
    <location>
        <begin position="18"/>
        <end position="278"/>
    </location>
</feature>
<feature type="active site" evidence="2 7">
    <location>
        <position position="36"/>
    </location>
</feature>
<feature type="active site" evidence="2 7">
    <location>
        <position position="190"/>
    </location>
</feature>
<feature type="glycosylation site" description="N-linked (GlcNAc...) asparagine" evidence="5">
    <location>
        <position position="213"/>
    </location>
</feature>
<feature type="disulfide bond" evidence="2 5">
    <location>
        <begin position="181"/>
        <end position="185"/>
    </location>
</feature>
<feature type="disulfide bond" evidence="2 5">
    <location>
        <begin status="unknown"/>
        <end position="238"/>
    </location>
</feature>
<feature type="non-consecutive residues" evidence="9">
    <location>
        <begin position="48"/>
        <end position="49"/>
    </location>
</feature>
<feature type="non-consecutive residues" evidence="9">
    <location>
        <begin position="62"/>
        <end position="63"/>
    </location>
</feature>
<feature type="non-consecutive residues" evidence="9">
    <location>
        <begin position="214"/>
        <end position="215"/>
    </location>
</feature>
<feature type="non-consecutive residues" evidence="9">
    <location>
        <begin position="220"/>
        <end position="221"/>
    </location>
</feature>
<feature type="non-consecutive residues" evidence="9">
    <location>
        <begin position="232"/>
        <end position="233"/>
    </location>
</feature>
<feature type="non-terminal residue" evidence="9">
    <location>
        <position position="281"/>
    </location>
</feature>
<protein>
    <recommendedName>
        <fullName evidence="9">Cardosin-F</fullName>
        <ecNumber>3.4.23.-</ecNumber>
    </recommendedName>
    <component>
        <recommendedName>
            <fullName evidence="9">Cardosin-F heavy chain</fullName>
        </recommendedName>
    </component>
    <component>
        <recommendedName>
            <fullName evidence="9">Cardosin-F light chain</fullName>
        </recommendedName>
    </component>
</protein>